<keyword id="KW-0002">3D-structure</keyword>
<keyword id="KW-0007">Acetylation</keyword>
<keyword id="KW-0025">Alternative splicing</keyword>
<keyword id="KW-0963">Cytoplasm</keyword>
<keyword id="KW-1017">Isopeptide bond</keyword>
<keyword id="KW-0597">Phosphoprotein</keyword>
<keyword id="KW-1267">Proteomics identification</keyword>
<keyword id="KW-1185">Reference proteome</keyword>
<keyword id="KW-0677">Repeat</keyword>
<keyword id="KW-0832">Ubl conjugation</keyword>
<protein>
    <recommendedName>
        <fullName>Pleckstrin homology domain-containing family A member 5</fullName>
        <shortName>PH domain-containing family A member 5</shortName>
    </recommendedName>
    <alternativeName>
        <fullName>Phosphoinositol 3-phosphate-binding protein 2</fullName>
        <shortName>PEPP-2</shortName>
    </alternativeName>
</protein>
<gene>
    <name type="primary">PLEKHA5</name>
    <name type="synonym">KIAA1686</name>
    <name type="synonym">PEPP2</name>
</gene>
<sequence>MAADLNLEWISLPRSWTYGITRGGRVFFINEEAKSTTWLHPVTGEAVVTGHRRQSTDLPTGWEEAYTFEGARYYINHNERKVTCKHPVTGQPSQDNCIFVVNEQTVATMTSEEKKERPISMINEASNYNVTSDYAVHPMSPVGRTSRASKKVHNFGKRSNSIKRNPNAPVVRRGWLYKQDSTGMKLWKKRWFVLSDLCLFYYRDEKEEGILGSILLPSFQIALLTSEDHINRKYAFKAAHPNMRTYYFCTDTGKEMELWMKAMLDAALVQTEPVKRVDKITSENAPTKETNNIPNHRVLIKPEIQNNQKNKEMSKIEEKKALEAEKYGFQKDGQDRPLTKINSVKLNSLPSEYESGSACPAQTVHYRPINLSSSENKIVNVSLADLRGGNRPNTGPLYTEADRVIQRTNSMQQLEQWIKIQKGRGHEEETRGVISYQTLPRNMPSHRAQIMARYPEGYRTLPRNSKTRPESICSVTPSTHDKTLGPGAEEKRRSMRDDTMWQLYEWQQRQFYNKQSTLPRHSTLSSPKTMVNISDQTMHSIPTSPSHGSIAAYQGYSPQRTYRSEVSSPIQRGDVTIDRRHRAHHPKHVYVPDRRSVPAGLTLQSVSPQSLQGKTLSQDEGRGTLYKYRPEEVDIDAKLSRLCEQDKVVHALEEKLQQLHKEKYTLEQALLSASQEIEMHADNPAAIQTVVLQRDDLQNGLLSTCRELSRATAELERAWREYDKLEYDVTVTRNQMQEQLDHLGEVQTESAGIQRAQIQKELWRIQDVMEGLSKHKQQRGTTEIGMIGSKPFSTVKYKNEGPDYRLYKSEPELTTVAEVDESNGEEKSEPVSEIETSVVKGSHFPVGVVPPRAKSPTPESSTIASYVTLRKTKKMMDLRTERPRSAVEQLCLAESTRPRMTVEEQMERIRRHQQACLREKKKGLNVIGASDQSPLQSPSNLRDNPFRTTQTRRRDDKELDTAIRENDVKPDHETPATEIVQLKETEPQNVDFSKELKKTENISYEMLFEPEPNGVNSVEMMDKERNKDKMPEDVTFSPQDETQTANHKPEEHPEENTKNSVDEQEETVISYESTPEVSRGNQTMAVKSLSPSPESSASPVPSTQPQLTEGSHFMCV</sequence>
<organism>
    <name type="scientific">Homo sapiens</name>
    <name type="common">Human</name>
    <dbReference type="NCBI Taxonomy" id="9606"/>
    <lineage>
        <taxon>Eukaryota</taxon>
        <taxon>Metazoa</taxon>
        <taxon>Chordata</taxon>
        <taxon>Craniata</taxon>
        <taxon>Vertebrata</taxon>
        <taxon>Euteleostomi</taxon>
        <taxon>Mammalia</taxon>
        <taxon>Eutheria</taxon>
        <taxon>Euarchontoglires</taxon>
        <taxon>Primates</taxon>
        <taxon>Haplorrhini</taxon>
        <taxon>Catarrhini</taxon>
        <taxon>Hominidae</taxon>
        <taxon>Homo</taxon>
    </lineage>
</organism>
<reference key="1">
    <citation type="journal article" date="2000" name="Biochem. J.">
        <title>Identification of pleckstrin-homology-domain-containing proteins with novel phosphoinositide-binding specificities.</title>
        <authorList>
            <person name="Dowler S.J."/>
            <person name="Currie R.A."/>
            <person name="Campbell D.G."/>
            <person name="Deak M."/>
            <person name="Kular G."/>
            <person name="Downes C.P."/>
            <person name="Alessi D.R."/>
        </authorList>
    </citation>
    <scope>NUCLEOTIDE SEQUENCE [MRNA] (ISOFORM 1)</scope>
    <scope>TISSUE SPECIFICITY</scope>
</reference>
<reference key="2">
    <citation type="journal article" date="2012" name="Gene">
        <title>Identification and characterization of splicing variants of PLEKHA5 (Plekha5) during brain development.</title>
        <authorList>
            <person name="Yamada K."/>
            <person name="Nomura N."/>
            <person name="Yamano A."/>
            <person name="Yamada Y."/>
            <person name="Wakamatsu N."/>
        </authorList>
    </citation>
    <scope>NUCLEOTIDE SEQUENCE [MRNA] (ISOFORM 6)</scope>
    <scope>SUBCELLULAR LOCATION</scope>
    <scope>DOMAIN PH</scope>
    <scope>ALTERNATIVE SPLICING</scope>
</reference>
<reference key="3">
    <citation type="journal article" date="2000" name="DNA Res.">
        <title>Prediction of the coding sequences of unidentified human genes. XIX. The complete sequences of 100 new cDNA clones from brain which code for large proteins in vitro.</title>
        <authorList>
            <person name="Nagase T."/>
            <person name="Kikuno R."/>
            <person name="Hattori A."/>
            <person name="Kondo Y."/>
            <person name="Okumura K."/>
            <person name="Ohara O."/>
        </authorList>
    </citation>
    <scope>NUCLEOTIDE SEQUENCE [LARGE SCALE MRNA] (ISOFORM 2)</scope>
    <source>
        <tissue>Brain</tissue>
    </source>
</reference>
<reference key="4">
    <citation type="journal article" date="2002" name="DNA Res.">
        <title>Construction of expression-ready cDNA clones for KIAA genes: manual curation of 330 KIAA cDNA clones.</title>
        <authorList>
            <person name="Nakajima D."/>
            <person name="Okazaki N."/>
            <person name="Yamakawa H."/>
            <person name="Kikuno R."/>
            <person name="Ohara O."/>
            <person name="Nagase T."/>
        </authorList>
    </citation>
    <scope>SEQUENCE REVISION</scope>
</reference>
<reference key="5">
    <citation type="journal article" date="2004" name="Nat. Genet.">
        <title>Complete sequencing and characterization of 21,243 full-length human cDNAs.</title>
        <authorList>
            <person name="Ota T."/>
            <person name="Suzuki Y."/>
            <person name="Nishikawa T."/>
            <person name="Otsuki T."/>
            <person name="Sugiyama T."/>
            <person name="Irie R."/>
            <person name="Wakamatsu A."/>
            <person name="Hayashi K."/>
            <person name="Sato H."/>
            <person name="Nagai K."/>
            <person name="Kimura K."/>
            <person name="Makita H."/>
            <person name="Sekine M."/>
            <person name="Obayashi M."/>
            <person name="Nishi T."/>
            <person name="Shibahara T."/>
            <person name="Tanaka T."/>
            <person name="Ishii S."/>
            <person name="Yamamoto J."/>
            <person name="Saito K."/>
            <person name="Kawai Y."/>
            <person name="Isono Y."/>
            <person name="Nakamura Y."/>
            <person name="Nagahari K."/>
            <person name="Murakami K."/>
            <person name="Yasuda T."/>
            <person name="Iwayanagi T."/>
            <person name="Wagatsuma M."/>
            <person name="Shiratori A."/>
            <person name="Sudo H."/>
            <person name="Hosoiri T."/>
            <person name="Kaku Y."/>
            <person name="Kodaira H."/>
            <person name="Kondo H."/>
            <person name="Sugawara M."/>
            <person name="Takahashi M."/>
            <person name="Kanda K."/>
            <person name="Yokoi T."/>
            <person name="Furuya T."/>
            <person name="Kikkawa E."/>
            <person name="Omura Y."/>
            <person name="Abe K."/>
            <person name="Kamihara K."/>
            <person name="Katsuta N."/>
            <person name="Sato K."/>
            <person name="Tanikawa M."/>
            <person name="Yamazaki M."/>
            <person name="Ninomiya K."/>
            <person name="Ishibashi T."/>
            <person name="Yamashita H."/>
            <person name="Murakawa K."/>
            <person name="Fujimori K."/>
            <person name="Tanai H."/>
            <person name="Kimata M."/>
            <person name="Watanabe M."/>
            <person name="Hiraoka S."/>
            <person name="Chiba Y."/>
            <person name="Ishida S."/>
            <person name="Ono Y."/>
            <person name="Takiguchi S."/>
            <person name="Watanabe S."/>
            <person name="Yosida M."/>
            <person name="Hotuta T."/>
            <person name="Kusano J."/>
            <person name="Kanehori K."/>
            <person name="Takahashi-Fujii A."/>
            <person name="Hara H."/>
            <person name="Tanase T.-O."/>
            <person name="Nomura Y."/>
            <person name="Togiya S."/>
            <person name="Komai F."/>
            <person name="Hara R."/>
            <person name="Takeuchi K."/>
            <person name="Arita M."/>
            <person name="Imose N."/>
            <person name="Musashino K."/>
            <person name="Yuuki H."/>
            <person name="Oshima A."/>
            <person name="Sasaki N."/>
            <person name="Aotsuka S."/>
            <person name="Yoshikawa Y."/>
            <person name="Matsunawa H."/>
            <person name="Ichihara T."/>
            <person name="Shiohata N."/>
            <person name="Sano S."/>
            <person name="Moriya S."/>
            <person name="Momiyama H."/>
            <person name="Satoh N."/>
            <person name="Takami S."/>
            <person name="Terashima Y."/>
            <person name="Suzuki O."/>
            <person name="Nakagawa S."/>
            <person name="Senoh A."/>
            <person name="Mizoguchi H."/>
            <person name="Goto Y."/>
            <person name="Shimizu F."/>
            <person name="Wakebe H."/>
            <person name="Hishigaki H."/>
            <person name="Watanabe T."/>
            <person name="Sugiyama A."/>
            <person name="Takemoto M."/>
            <person name="Kawakami B."/>
            <person name="Yamazaki M."/>
            <person name="Watanabe K."/>
            <person name="Kumagai A."/>
            <person name="Itakura S."/>
            <person name="Fukuzumi Y."/>
            <person name="Fujimori Y."/>
            <person name="Komiyama M."/>
            <person name="Tashiro H."/>
            <person name="Tanigami A."/>
            <person name="Fujiwara T."/>
            <person name="Ono T."/>
            <person name="Yamada K."/>
            <person name="Fujii Y."/>
            <person name="Ozaki K."/>
            <person name="Hirao M."/>
            <person name="Ohmori Y."/>
            <person name="Kawabata A."/>
            <person name="Hikiji T."/>
            <person name="Kobatake N."/>
            <person name="Inagaki H."/>
            <person name="Ikema Y."/>
            <person name="Okamoto S."/>
            <person name="Okitani R."/>
            <person name="Kawakami T."/>
            <person name="Noguchi S."/>
            <person name="Itoh T."/>
            <person name="Shigeta K."/>
            <person name="Senba T."/>
            <person name="Matsumura K."/>
            <person name="Nakajima Y."/>
            <person name="Mizuno T."/>
            <person name="Morinaga M."/>
            <person name="Sasaki M."/>
            <person name="Togashi T."/>
            <person name="Oyama M."/>
            <person name="Hata H."/>
            <person name="Watanabe M."/>
            <person name="Komatsu T."/>
            <person name="Mizushima-Sugano J."/>
            <person name="Satoh T."/>
            <person name="Shirai Y."/>
            <person name="Takahashi Y."/>
            <person name="Nakagawa K."/>
            <person name="Okumura K."/>
            <person name="Nagase T."/>
            <person name="Nomura N."/>
            <person name="Kikuchi H."/>
            <person name="Masuho Y."/>
            <person name="Yamashita R."/>
            <person name="Nakai K."/>
            <person name="Yada T."/>
            <person name="Nakamura Y."/>
            <person name="Ohara O."/>
            <person name="Isogai T."/>
            <person name="Sugano S."/>
        </authorList>
    </citation>
    <scope>NUCLEOTIDE SEQUENCE [LARGE SCALE MRNA] (ISOFORM 8)</scope>
    <scope>NUCLEOTIDE SEQUENCE [LARGE SCALE MRNA] OF 625-1116 (ISOFORM 1)</scope>
    <scope>NUCLEOTIDE SEQUENCE [LARGE SCALE MRNA] OF 664-1116 (ISOFORM 5)</scope>
    <source>
        <tissue>Brain</tissue>
        <tissue>Teratocarcinoma</tissue>
    </source>
</reference>
<reference key="6">
    <citation type="journal article" date="2007" name="BMC Genomics">
        <title>The full-ORF clone resource of the German cDNA consortium.</title>
        <authorList>
            <person name="Bechtel S."/>
            <person name="Rosenfelder H."/>
            <person name="Duda A."/>
            <person name="Schmidt C.P."/>
            <person name="Ernst U."/>
            <person name="Wellenreuther R."/>
            <person name="Mehrle A."/>
            <person name="Schuster C."/>
            <person name="Bahr A."/>
            <person name="Bloecker H."/>
            <person name="Heubner D."/>
            <person name="Hoerlein A."/>
            <person name="Michel G."/>
            <person name="Wedler H."/>
            <person name="Koehrer K."/>
            <person name="Ottenwaelder B."/>
            <person name="Poustka A."/>
            <person name="Wiemann S."/>
            <person name="Schupp I."/>
        </authorList>
    </citation>
    <scope>NUCLEOTIDE SEQUENCE [LARGE SCALE MRNA] (ISOFORM 4)</scope>
    <source>
        <tissue>Amygdala</tissue>
    </source>
</reference>
<reference key="7">
    <citation type="journal article" date="2006" name="Nature">
        <title>The finished DNA sequence of human chromosome 12.</title>
        <authorList>
            <person name="Scherer S.E."/>
            <person name="Muzny D.M."/>
            <person name="Buhay C.J."/>
            <person name="Chen R."/>
            <person name="Cree A."/>
            <person name="Ding Y."/>
            <person name="Dugan-Rocha S."/>
            <person name="Gill R."/>
            <person name="Gunaratne P."/>
            <person name="Harris R.A."/>
            <person name="Hawes A.C."/>
            <person name="Hernandez J."/>
            <person name="Hodgson A.V."/>
            <person name="Hume J."/>
            <person name="Jackson A."/>
            <person name="Khan Z.M."/>
            <person name="Kovar-Smith C."/>
            <person name="Lewis L.R."/>
            <person name="Lozado R.J."/>
            <person name="Metzker M.L."/>
            <person name="Milosavljevic A."/>
            <person name="Miner G.R."/>
            <person name="Montgomery K.T."/>
            <person name="Morgan M.B."/>
            <person name="Nazareth L.V."/>
            <person name="Scott G."/>
            <person name="Sodergren E."/>
            <person name="Song X.-Z."/>
            <person name="Steffen D."/>
            <person name="Lovering R.C."/>
            <person name="Wheeler D.A."/>
            <person name="Worley K.C."/>
            <person name="Yuan Y."/>
            <person name="Zhang Z."/>
            <person name="Adams C.Q."/>
            <person name="Ansari-Lari M.A."/>
            <person name="Ayele M."/>
            <person name="Brown M.J."/>
            <person name="Chen G."/>
            <person name="Chen Z."/>
            <person name="Clerc-Blankenburg K.P."/>
            <person name="Davis C."/>
            <person name="Delgado O."/>
            <person name="Dinh H.H."/>
            <person name="Draper H."/>
            <person name="Gonzalez-Garay M.L."/>
            <person name="Havlak P."/>
            <person name="Jackson L.R."/>
            <person name="Jacob L.S."/>
            <person name="Kelly S.H."/>
            <person name="Li L."/>
            <person name="Li Z."/>
            <person name="Liu J."/>
            <person name="Liu W."/>
            <person name="Lu J."/>
            <person name="Maheshwari M."/>
            <person name="Nguyen B.-V."/>
            <person name="Okwuonu G.O."/>
            <person name="Pasternak S."/>
            <person name="Perez L.M."/>
            <person name="Plopper F.J.H."/>
            <person name="Santibanez J."/>
            <person name="Shen H."/>
            <person name="Tabor P.E."/>
            <person name="Verduzco D."/>
            <person name="Waldron L."/>
            <person name="Wang Q."/>
            <person name="Williams G.A."/>
            <person name="Zhang J."/>
            <person name="Zhou J."/>
            <person name="Allen C.C."/>
            <person name="Amin A.G."/>
            <person name="Anyalebechi V."/>
            <person name="Bailey M."/>
            <person name="Barbaria J.A."/>
            <person name="Bimage K.E."/>
            <person name="Bryant N.P."/>
            <person name="Burch P.E."/>
            <person name="Burkett C.E."/>
            <person name="Burrell K.L."/>
            <person name="Calderon E."/>
            <person name="Cardenas V."/>
            <person name="Carter K."/>
            <person name="Casias K."/>
            <person name="Cavazos I."/>
            <person name="Cavazos S.R."/>
            <person name="Ceasar H."/>
            <person name="Chacko J."/>
            <person name="Chan S.N."/>
            <person name="Chavez D."/>
            <person name="Christopoulos C."/>
            <person name="Chu J."/>
            <person name="Cockrell R."/>
            <person name="Cox C.D."/>
            <person name="Dang M."/>
            <person name="Dathorne S.R."/>
            <person name="David R."/>
            <person name="Davis C.M."/>
            <person name="Davy-Carroll L."/>
            <person name="Deshazo D.R."/>
            <person name="Donlin J.E."/>
            <person name="D'Souza L."/>
            <person name="Eaves K.A."/>
            <person name="Egan A."/>
            <person name="Emery-Cohen A.J."/>
            <person name="Escotto M."/>
            <person name="Flagg N."/>
            <person name="Forbes L.D."/>
            <person name="Gabisi A.M."/>
            <person name="Garza M."/>
            <person name="Hamilton C."/>
            <person name="Henderson N."/>
            <person name="Hernandez O."/>
            <person name="Hines S."/>
            <person name="Hogues M.E."/>
            <person name="Huang M."/>
            <person name="Idlebird D.G."/>
            <person name="Johnson R."/>
            <person name="Jolivet A."/>
            <person name="Jones S."/>
            <person name="Kagan R."/>
            <person name="King L.M."/>
            <person name="Leal B."/>
            <person name="Lebow H."/>
            <person name="Lee S."/>
            <person name="LeVan J.M."/>
            <person name="Lewis L.C."/>
            <person name="London P."/>
            <person name="Lorensuhewa L.M."/>
            <person name="Loulseged H."/>
            <person name="Lovett D.A."/>
            <person name="Lucier A."/>
            <person name="Lucier R.L."/>
            <person name="Ma J."/>
            <person name="Madu R.C."/>
            <person name="Mapua P."/>
            <person name="Martindale A.D."/>
            <person name="Martinez E."/>
            <person name="Massey E."/>
            <person name="Mawhiney S."/>
            <person name="Meador M.G."/>
            <person name="Mendez S."/>
            <person name="Mercado C."/>
            <person name="Mercado I.C."/>
            <person name="Merritt C.E."/>
            <person name="Miner Z.L."/>
            <person name="Minja E."/>
            <person name="Mitchell T."/>
            <person name="Mohabbat F."/>
            <person name="Mohabbat K."/>
            <person name="Montgomery B."/>
            <person name="Moore N."/>
            <person name="Morris S."/>
            <person name="Munidasa M."/>
            <person name="Ngo R.N."/>
            <person name="Nguyen N.B."/>
            <person name="Nickerson E."/>
            <person name="Nwaokelemeh O.O."/>
            <person name="Nwokenkwo S."/>
            <person name="Obregon M."/>
            <person name="Oguh M."/>
            <person name="Oragunye N."/>
            <person name="Oviedo R.J."/>
            <person name="Parish B.J."/>
            <person name="Parker D.N."/>
            <person name="Parrish J."/>
            <person name="Parks K.L."/>
            <person name="Paul H.A."/>
            <person name="Payton B.A."/>
            <person name="Perez A."/>
            <person name="Perrin W."/>
            <person name="Pickens A."/>
            <person name="Primus E.L."/>
            <person name="Pu L.-L."/>
            <person name="Puazo M."/>
            <person name="Quiles M.M."/>
            <person name="Quiroz J.B."/>
            <person name="Rabata D."/>
            <person name="Reeves K."/>
            <person name="Ruiz S.J."/>
            <person name="Shao H."/>
            <person name="Sisson I."/>
            <person name="Sonaike T."/>
            <person name="Sorelle R.P."/>
            <person name="Sutton A.E."/>
            <person name="Svatek A.F."/>
            <person name="Svetz L.A."/>
            <person name="Tamerisa K.S."/>
            <person name="Taylor T.R."/>
            <person name="Teague B."/>
            <person name="Thomas N."/>
            <person name="Thorn R.D."/>
            <person name="Trejos Z.Y."/>
            <person name="Trevino B.K."/>
            <person name="Ukegbu O.N."/>
            <person name="Urban J.B."/>
            <person name="Vasquez L.I."/>
            <person name="Vera V.A."/>
            <person name="Villasana D.M."/>
            <person name="Wang L."/>
            <person name="Ward-Moore S."/>
            <person name="Warren J.T."/>
            <person name="Wei X."/>
            <person name="White F."/>
            <person name="Williamson A.L."/>
            <person name="Wleczyk R."/>
            <person name="Wooden H.S."/>
            <person name="Wooden S.H."/>
            <person name="Yen J."/>
            <person name="Yoon L."/>
            <person name="Yoon V."/>
            <person name="Zorrilla S.E."/>
            <person name="Nelson D."/>
            <person name="Kucherlapati R."/>
            <person name="Weinstock G."/>
            <person name="Gibbs R.A."/>
        </authorList>
    </citation>
    <scope>NUCLEOTIDE SEQUENCE [LARGE SCALE GENOMIC DNA]</scope>
</reference>
<reference key="8">
    <citation type="submission" date="2005-07" db="EMBL/GenBank/DDBJ databases">
        <authorList>
            <person name="Mural R.J."/>
            <person name="Istrail S."/>
            <person name="Sutton G."/>
            <person name="Florea L."/>
            <person name="Halpern A.L."/>
            <person name="Mobarry C.M."/>
            <person name="Lippert R."/>
            <person name="Walenz B."/>
            <person name="Shatkay H."/>
            <person name="Dew I."/>
            <person name="Miller J.R."/>
            <person name="Flanigan M.J."/>
            <person name="Edwards N.J."/>
            <person name="Bolanos R."/>
            <person name="Fasulo D."/>
            <person name="Halldorsson B.V."/>
            <person name="Hannenhalli S."/>
            <person name="Turner R."/>
            <person name="Yooseph S."/>
            <person name="Lu F."/>
            <person name="Nusskern D.R."/>
            <person name="Shue B.C."/>
            <person name="Zheng X.H."/>
            <person name="Zhong F."/>
            <person name="Delcher A.L."/>
            <person name="Huson D.H."/>
            <person name="Kravitz S.A."/>
            <person name="Mouchard L."/>
            <person name="Reinert K."/>
            <person name="Remington K.A."/>
            <person name="Clark A.G."/>
            <person name="Waterman M.S."/>
            <person name="Eichler E.E."/>
            <person name="Adams M.D."/>
            <person name="Hunkapiller M.W."/>
            <person name="Myers E.W."/>
            <person name="Venter J.C."/>
        </authorList>
    </citation>
    <scope>NUCLEOTIDE SEQUENCE [LARGE SCALE GENOMIC DNA]</scope>
</reference>
<reference key="9">
    <citation type="journal article" date="2004" name="Genome Res.">
        <title>The status, quality, and expansion of the NIH full-length cDNA project: the Mammalian Gene Collection (MGC).</title>
        <authorList>
            <consortium name="The MGC Project Team"/>
        </authorList>
    </citation>
    <scope>NUCLEOTIDE SEQUENCE [LARGE SCALE MRNA] (ISOFORMS 1 AND 7)</scope>
    <scope>NUCLEOTIDE SEQUENCE [LARGE SCALE MRNA] OF 159-1116 (ISOFORM 3)</scope>
    <source>
        <tissue>Colon</tissue>
        <tissue>Lung</tissue>
        <tissue>Placenta</tissue>
    </source>
</reference>
<reference key="10">
    <citation type="journal article" date="2006" name="Cell">
        <title>Global, in vivo, and site-specific phosphorylation dynamics in signaling networks.</title>
        <authorList>
            <person name="Olsen J.V."/>
            <person name="Blagoev B."/>
            <person name="Gnad F."/>
            <person name="Macek B."/>
            <person name="Kumar C."/>
            <person name="Mortensen P."/>
            <person name="Mann M."/>
        </authorList>
    </citation>
    <scope>PHOSPHORYLATION [LARGE SCALE ANALYSIS] AT SER-933</scope>
    <scope>IDENTIFICATION BY MASS SPECTROMETRY [LARGE SCALE ANALYSIS]</scope>
    <source>
        <tissue>Cervix carcinoma</tissue>
    </source>
</reference>
<reference key="11">
    <citation type="journal article" date="2008" name="J. Proteome Res.">
        <title>Combining protein-based IMAC, peptide-based IMAC, and MudPIT for efficient phosphoproteomic analysis.</title>
        <authorList>
            <person name="Cantin G.T."/>
            <person name="Yi W."/>
            <person name="Lu B."/>
            <person name="Park S.K."/>
            <person name="Xu T."/>
            <person name="Lee J.-D."/>
            <person name="Yates J.R. III"/>
        </authorList>
    </citation>
    <scope>PHOSPHORYLATION [LARGE SCALE ANALYSIS] AT SER-933</scope>
    <scope>IDENTIFICATION BY MASS SPECTROMETRY [LARGE SCALE ANALYSIS]</scope>
    <source>
        <tissue>Cervix carcinoma</tissue>
    </source>
</reference>
<reference key="12">
    <citation type="journal article" date="2008" name="Proc. Natl. Acad. Sci. U.S.A.">
        <title>A quantitative atlas of mitotic phosphorylation.</title>
        <authorList>
            <person name="Dephoure N."/>
            <person name="Zhou C."/>
            <person name="Villen J."/>
            <person name="Beausoleil S.A."/>
            <person name="Bakalarski C.E."/>
            <person name="Elledge S.J."/>
            <person name="Gygi S.P."/>
        </authorList>
    </citation>
    <scope>PHOSPHORYLATION [LARGE SCALE ANALYSIS] AT SER-855 AND SER-933</scope>
    <scope>IDENTIFICATION BY MASS SPECTROMETRY [LARGE SCALE ANALYSIS]</scope>
    <source>
        <tissue>Cervix carcinoma</tissue>
    </source>
</reference>
<reference key="13">
    <citation type="journal article" date="2009" name="Anal. Chem.">
        <title>Lys-N and trypsin cover complementary parts of the phosphoproteome in a refined SCX-based approach.</title>
        <authorList>
            <person name="Gauci S."/>
            <person name="Helbig A.O."/>
            <person name="Slijper M."/>
            <person name="Krijgsveld J."/>
            <person name="Heck A.J."/>
            <person name="Mohammed S."/>
        </authorList>
    </citation>
    <scope>IDENTIFICATION BY MASS SPECTROMETRY [LARGE SCALE ANALYSIS]</scope>
</reference>
<reference key="14">
    <citation type="journal article" date="2009" name="Sci. Signal.">
        <title>Quantitative phosphoproteomic analysis of T cell receptor signaling reveals system-wide modulation of protein-protein interactions.</title>
        <authorList>
            <person name="Mayya V."/>
            <person name="Lundgren D.H."/>
            <person name="Hwang S.-I."/>
            <person name="Rezaul K."/>
            <person name="Wu L."/>
            <person name="Eng J.K."/>
            <person name="Rodionov V."/>
            <person name="Han D.K."/>
        </authorList>
    </citation>
    <scope>PHOSPHORYLATION [LARGE SCALE ANALYSIS] AT SER-933</scope>
    <scope>IDENTIFICATION BY MASS SPECTROMETRY [LARGE SCALE ANALYSIS]</scope>
    <source>
        <tissue>Leukemic T-cell</tissue>
    </source>
</reference>
<reference key="15">
    <citation type="journal article" date="2011" name="BMC Syst. Biol.">
        <title>Initial characterization of the human central proteome.</title>
        <authorList>
            <person name="Burkard T.R."/>
            <person name="Planyavsky M."/>
            <person name="Kaupe I."/>
            <person name="Breitwieser F.P."/>
            <person name="Buerckstuemmer T."/>
            <person name="Bennett K.L."/>
            <person name="Superti-Furga G."/>
            <person name="Colinge J."/>
        </authorList>
    </citation>
    <scope>IDENTIFICATION BY MASS SPECTROMETRY [LARGE SCALE ANALYSIS]</scope>
</reference>
<reference key="16">
    <citation type="journal article" date="2011" name="Sci. Signal.">
        <title>System-wide temporal characterization of the proteome and phosphoproteome of human embryonic stem cell differentiation.</title>
        <authorList>
            <person name="Rigbolt K.T."/>
            <person name="Prokhorova T.A."/>
            <person name="Akimov V."/>
            <person name="Henningsen J."/>
            <person name="Johansen P.T."/>
            <person name="Kratchmarova I."/>
            <person name="Kassem M."/>
            <person name="Mann M."/>
            <person name="Olsen J.V."/>
            <person name="Blagoev B."/>
        </authorList>
    </citation>
    <scope>PHOSPHORYLATION [LARGE SCALE ANALYSIS] AT SER-809 AND SER-855</scope>
    <scope>IDENTIFICATION BY MASS SPECTROMETRY [LARGE SCALE ANALYSIS]</scope>
</reference>
<reference key="17">
    <citation type="journal article" date="2012" name="Mol. Cell. Proteomics">
        <title>Comparative large-scale characterisation of plant vs. mammal proteins reveals similar and idiosyncratic N-alpha acetylation features.</title>
        <authorList>
            <person name="Bienvenut W.V."/>
            <person name="Sumpton D."/>
            <person name="Martinez A."/>
            <person name="Lilla S."/>
            <person name="Espagne C."/>
            <person name="Meinnel T."/>
            <person name="Giglione C."/>
        </authorList>
    </citation>
    <scope>ACETYLATION [LARGE SCALE ANALYSIS] AT ALA-2</scope>
    <scope>CLEAVAGE OF INITIATOR METHIONINE [LARGE SCALE ANALYSIS]</scope>
    <scope>IDENTIFICATION BY MASS SPECTROMETRY [LARGE SCALE ANALYSIS]</scope>
</reference>
<reference key="18">
    <citation type="journal article" date="2013" name="J. Proteome Res.">
        <title>Toward a comprehensive characterization of a human cancer cell phosphoproteome.</title>
        <authorList>
            <person name="Zhou H."/>
            <person name="Di Palma S."/>
            <person name="Preisinger C."/>
            <person name="Peng M."/>
            <person name="Polat A.N."/>
            <person name="Heck A.J."/>
            <person name="Mohammed S."/>
        </authorList>
    </citation>
    <scope>PHOSPHORYLATION [LARGE SCALE ANALYSIS] AT SER-55; SER-382; SER-410; THR-438; THR-460; SER-568; SER-607; SER-809; SER-855; SER-933 AND SER-937</scope>
    <scope>IDENTIFICATION BY MASS SPECTROMETRY [LARGE SCALE ANALYSIS]</scope>
    <source>
        <tissue>Cervix carcinoma</tissue>
        <tissue>Erythroleukemia</tissue>
    </source>
</reference>
<reference key="19">
    <citation type="journal article" date="2014" name="J. Proteomics">
        <title>An enzyme assisted RP-RPLC approach for in-depth analysis of human liver phosphoproteome.</title>
        <authorList>
            <person name="Bian Y."/>
            <person name="Song C."/>
            <person name="Cheng K."/>
            <person name="Dong M."/>
            <person name="Wang F."/>
            <person name="Huang J."/>
            <person name="Sun D."/>
            <person name="Wang L."/>
            <person name="Ye M."/>
            <person name="Zou H."/>
        </authorList>
    </citation>
    <scope>IDENTIFICATION BY MASS SPECTROMETRY [LARGE SCALE ANALYSIS]</scope>
    <source>
        <tissue>Liver</tissue>
    </source>
</reference>
<reference key="20">
    <citation type="journal article" date="2017" name="Nat. Struct. Mol. Biol.">
        <title>Site-specific mapping of the human SUMO proteome reveals co-modification with phosphorylation.</title>
        <authorList>
            <person name="Hendriks I.A."/>
            <person name="Lyon D."/>
            <person name="Young C."/>
            <person name="Jensen L.J."/>
            <person name="Vertegaal A.C."/>
            <person name="Nielsen M.L."/>
        </authorList>
    </citation>
    <scope>SUMOYLATION [LARGE SCALE ANALYSIS] AT LYS-301</scope>
    <scope>IDENTIFICATION BY MASS SPECTROMETRY [LARGE SCALE ANALYSIS]</scope>
</reference>
<reference key="21">
    <citation type="submission" date="2006-10" db="PDB data bank">
        <title>Solution structure of the PH domain of pleckstrin homology domain-containing protein family A member 5 from human.</title>
        <authorList>
            <consortium name="RIKEN structural genomics initiative (RSGI)"/>
        </authorList>
    </citation>
    <scope>STRUCTURE BY NMR OF 156-271</scope>
</reference>
<accession>Q9HAU0</accession>
<accession>A0JP03</accession>
<accession>B4DGS1</accession>
<accession>E9PHQ3</accession>
<accession>F5H0I0</accession>
<accession>Q6NSF8</accession>
<accession>Q86ST7</accession>
<accession>Q8N3K6</accession>
<accession>Q96DY9</accession>
<accession>Q9BVR4</accession>
<accession>Q9C0H7</accession>
<accession>Q9H924</accession>
<accession>Q9NVK8</accession>
<evidence type="ECO:0000255" key="1">
    <source>
        <dbReference type="PROSITE-ProRule" id="PRU00145"/>
    </source>
</evidence>
<evidence type="ECO:0000255" key="2">
    <source>
        <dbReference type="PROSITE-ProRule" id="PRU00224"/>
    </source>
</evidence>
<evidence type="ECO:0000256" key="3">
    <source>
        <dbReference type="SAM" id="MobiDB-lite"/>
    </source>
</evidence>
<evidence type="ECO:0000269" key="4">
    <source>
    </source>
</evidence>
<evidence type="ECO:0000269" key="5">
    <source>
    </source>
</evidence>
<evidence type="ECO:0000303" key="6">
    <source>
    </source>
</evidence>
<evidence type="ECO:0000303" key="7">
    <source>
    </source>
</evidence>
<evidence type="ECO:0000303" key="8">
    <source>
    </source>
</evidence>
<evidence type="ECO:0000303" key="9">
    <source>
    </source>
</evidence>
<evidence type="ECO:0000303" key="10">
    <source>
    </source>
</evidence>
<evidence type="ECO:0000305" key="11"/>
<evidence type="ECO:0007744" key="12">
    <source>
    </source>
</evidence>
<evidence type="ECO:0007744" key="13">
    <source>
    </source>
</evidence>
<evidence type="ECO:0007744" key="14">
    <source>
    </source>
</evidence>
<evidence type="ECO:0007744" key="15">
    <source>
    </source>
</evidence>
<evidence type="ECO:0007744" key="16">
    <source>
    </source>
</evidence>
<evidence type="ECO:0007744" key="17">
    <source>
    </source>
</evidence>
<evidence type="ECO:0007744" key="18">
    <source>
    </source>
</evidence>
<evidence type="ECO:0007744" key="19">
    <source>
    </source>
</evidence>
<evidence type="ECO:0007829" key="20">
    <source>
        <dbReference type="PDB" id="2DKP"/>
    </source>
</evidence>
<comment type="interaction">
    <interactant intactId="EBI-945934">
        <id>Q9HAU0</id>
    </interactant>
    <interactant intactId="EBI-945980">
        <id>P54259</id>
        <label>ATN1</label>
    </interactant>
    <organismsDiffer>false</organismsDiffer>
    <experiments>2</experiments>
</comment>
<comment type="interaction">
    <interactant intactId="EBI-945934">
        <id>Q9HAU0</id>
    </interactant>
    <interactant intactId="EBI-930964">
        <id>P54253</id>
        <label>ATXN1</label>
    </interactant>
    <organismsDiffer>false</organismsDiffer>
    <experiments>2</experiments>
</comment>
<comment type="interaction">
    <interactant intactId="EBI-945934">
        <id>Q9HAU0</id>
    </interactant>
    <interactant intactId="EBI-1644207">
        <id>Q5EBL8</id>
        <label>PDZD11</label>
    </interactant>
    <organismsDiffer>false</organismsDiffer>
    <experiments>11</experiments>
</comment>
<comment type="interaction">
    <interactant intactId="EBI-945934">
        <id>Q9HAU0</id>
    </interactant>
    <interactant intactId="EBI-945906">
        <id>Q9NWB1</id>
        <label>RBFOX1</label>
    </interactant>
    <organismsDiffer>false</organismsDiffer>
    <experiments>2</experiments>
</comment>
<comment type="interaction">
    <interactant intactId="EBI-945934">
        <id>Q9HAU0</id>
    </interactant>
    <interactant intactId="EBI-25475885">
        <id>PRO_0000449629</id>
        <label>rep</label>
        <dbReference type="UniProtKB" id="P0DTD1"/>
    </interactant>
    <organismsDiffer>true</organismsDiffer>
    <experiments>3</experiments>
</comment>
<comment type="subcellular location">
    <subcellularLocation>
        <location evidence="5">Cytoplasm</location>
    </subcellularLocation>
</comment>
<comment type="alternative products">
    <event type="alternative splicing"/>
    <isoform>
        <id>Q9HAU0-1</id>
        <name>1</name>
        <name>S</name>
        <sequence type="displayed"/>
    </isoform>
    <isoform>
        <id>Q9HAU0-2</id>
        <name>2</name>
        <sequence type="described" ref="VSP_009775"/>
    </isoform>
    <isoform>
        <id>Q9HAU0-3</id>
        <name>3</name>
        <sequence type="described" ref="VSP_009776 VSP_014595"/>
    </isoform>
    <isoform>
        <id>Q9HAU0-4</id>
        <name>4</name>
        <sequence type="described" ref="VSP_009778"/>
    </isoform>
    <isoform>
        <id>Q9HAU0-5</id>
        <name>5</name>
        <sequence type="described" ref="VSP_009777"/>
    </isoform>
    <isoform>
        <id>Q9HAU0-6</id>
        <name>6</name>
        <name>L</name>
        <sequence type="described" ref="VSP_044678 VSP_009775 VSP_044679 VSP_009778"/>
    </isoform>
    <isoform>
        <id>Q9HAU0-7</id>
        <name>7</name>
        <sequence type="described" ref="VSP_046861"/>
    </isoform>
    <isoform>
        <id>Q9HAU0-8</id>
        <name>8</name>
        <sequence type="described" ref="VSP_047514 VSP_047515 VSP_009778"/>
    </isoform>
</comment>
<comment type="tissue specificity">
    <text evidence="4">Highly expressed in heart and kidney.</text>
</comment>
<comment type="domain">
    <text evidence="5">Specifically interacts with PI3P, PI4P, PI5P, and PI(3,5)P2.</text>
</comment>
<comment type="miscellaneous">
    <molecule>Isoform 6</molecule>
    <text evidence="11">Specifically expressed in brain.</text>
</comment>
<comment type="sequence caution" evidence="11">
    <conflict type="miscellaneous discrepancy">
        <sequence resource="EMBL-CDS" id="AAH70174"/>
    </conflict>
    <text>Contaminating sequence. Potential poly-A sequence.</text>
</comment>
<comment type="sequence caution" evidence="11">
    <conflict type="frameshift">
        <sequence resource="EMBL-CDS" id="BAA91742"/>
    </conflict>
</comment>
<comment type="sequence caution" evidence="11">
    <conflict type="erroneous initiation">
        <sequence resource="EMBL-CDS" id="BAB14419"/>
    </conflict>
</comment>
<comment type="sequence caution" evidence="11">
    <conflict type="erroneous initiation">
        <sequence resource="EMBL-CDS" id="BAB21777"/>
    </conflict>
</comment>
<dbReference type="EMBL" id="AF302150">
    <property type="protein sequence ID" value="AAG22817.1"/>
    <property type="molecule type" value="mRNA"/>
</dbReference>
<dbReference type="EMBL" id="AB642244">
    <property type="protein sequence ID" value="BAL45489.1"/>
    <property type="molecule type" value="mRNA"/>
</dbReference>
<dbReference type="EMBL" id="AB051473">
    <property type="protein sequence ID" value="BAB21777.2"/>
    <property type="status" value="ALT_INIT"/>
    <property type="molecule type" value="mRNA"/>
</dbReference>
<dbReference type="EMBL" id="AK001529">
    <property type="protein sequence ID" value="BAA91742.1"/>
    <property type="status" value="ALT_FRAME"/>
    <property type="molecule type" value="mRNA"/>
</dbReference>
<dbReference type="EMBL" id="AK023127">
    <property type="protein sequence ID" value="BAB14419.1"/>
    <property type="status" value="ALT_INIT"/>
    <property type="molecule type" value="mRNA"/>
</dbReference>
<dbReference type="EMBL" id="AK294739">
    <property type="protein sequence ID" value="BAG57882.1"/>
    <property type="molecule type" value="mRNA"/>
</dbReference>
<dbReference type="EMBL" id="AL834259">
    <property type="protein sequence ID" value="CAD38934.1"/>
    <property type="molecule type" value="mRNA"/>
</dbReference>
<dbReference type="EMBL" id="AC024902">
    <property type="status" value="NOT_ANNOTATED_CDS"/>
    <property type="molecule type" value="Genomic_DNA"/>
</dbReference>
<dbReference type="EMBL" id="AC087314">
    <property type="status" value="NOT_ANNOTATED_CDS"/>
    <property type="molecule type" value="Genomic_DNA"/>
</dbReference>
<dbReference type="EMBL" id="AC091805">
    <property type="status" value="NOT_ANNOTATED_CDS"/>
    <property type="molecule type" value="Genomic_DNA"/>
</dbReference>
<dbReference type="EMBL" id="AC092828">
    <property type="status" value="NOT_ANNOTATED_CDS"/>
    <property type="molecule type" value="Genomic_DNA"/>
</dbReference>
<dbReference type="EMBL" id="CH471094">
    <property type="protein sequence ID" value="EAW96393.1"/>
    <property type="molecule type" value="Genomic_DNA"/>
</dbReference>
<dbReference type="EMBL" id="BC000969">
    <property type="protein sequence ID" value="AAH00969.1"/>
    <property type="molecule type" value="mRNA"/>
</dbReference>
<dbReference type="EMBL" id="BC044245">
    <property type="protein sequence ID" value="AAH44245.1"/>
    <property type="molecule type" value="mRNA"/>
</dbReference>
<dbReference type="EMBL" id="BC070174">
    <property type="protein sequence ID" value="AAH70174.1"/>
    <property type="status" value="ALT_SEQ"/>
    <property type="molecule type" value="mRNA"/>
</dbReference>
<dbReference type="EMBL" id="BC013133">
    <property type="protein sequence ID" value="AAH13133.3"/>
    <property type="molecule type" value="mRNA"/>
</dbReference>
<dbReference type="EMBL" id="BC127092">
    <property type="protein sequence ID" value="AAI27093.1"/>
    <property type="molecule type" value="mRNA"/>
</dbReference>
<dbReference type="CCDS" id="CCDS44840.2">
    <molecule id="Q9HAU0-2"/>
</dbReference>
<dbReference type="CCDS" id="CCDS55809.1">
    <molecule id="Q9HAU0-7"/>
</dbReference>
<dbReference type="CCDS" id="CCDS58213.1">
    <molecule id="Q9HAU0-6"/>
</dbReference>
<dbReference type="CCDS" id="CCDS58214.1">
    <molecule id="Q9HAU0-8"/>
</dbReference>
<dbReference type="CCDS" id="CCDS8682.1">
    <molecule id="Q9HAU0-1"/>
</dbReference>
<dbReference type="RefSeq" id="NP_001137293.2">
    <molecule id="Q9HAU0-2"/>
    <property type="nucleotide sequence ID" value="NM_001143821.3"/>
</dbReference>
<dbReference type="RefSeq" id="NP_001177789.2">
    <molecule id="Q9HAU0-7"/>
    <property type="nucleotide sequence ID" value="NM_001190860.3"/>
</dbReference>
<dbReference type="RefSeq" id="NP_001243399.1">
    <molecule id="Q9HAU0-6"/>
    <property type="nucleotide sequence ID" value="NM_001256470.2"/>
</dbReference>
<dbReference type="RefSeq" id="NP_001243716.1">
    <molecule id="Q9HAU0-8"/>
    <property type="nucleotide sequence ID" value="NM_001256787.2"/>
</dbReference>
<dbReference type="RefSeq" id="NP_001372861.1">
    <molecule id="Q9HAU0-4"/>
    <property type="nucleotide sequence ID" value="NM_001385932.1"/>
</dbReference>
<dbReference type="RefSeq" id="NP_001372897.1">
    <molecule id="Q9HAU0-2"/>
    <property type="nucleotide sequence ID" value="NM_001385968.1"/>
</dbReference>
<dbReference type="RefSeq" id="NP_061885.2">
    <molecule id="Q9HAU0-1"/>
    <property type="nucleotide sequence ID" value="NM_019012.5"/>
</dbReference>
<dbReference type="RefSeq" id="XP_005253457.1">
    <property type="nucleotide sequence ID" value="XM_005253400.1"/>
</dbReference>
<dbReference type="RefSeq" id="XP_011519019.1">
    <property type="nucleotide sequence ID" value="XM_011520717.1"/>
</dbReference>
<dbReference type="RefSeq" id="XP_016874992.1">
    <molecule id="Q9HAU0-7"/>
    <property type="nucleotide sequence ID" value="XM_017019503.2"/>
</dbReference>
<dbReference type="RefSeq" id="XP_054228319.1">
    <molecule id="Q9HAU0-7"/>
    <property type="nucleotide sequence ID" value="XM_054372344.1"/>
</dbReference>
<dbReference type="PDB" id="2DKP">
    <property type="method" value="NMR"/>
    <property type="chains" value="A=157-271"/>
</dbReference>
<dbReference type="PDBsum" id="2DKP"/>
<dbReference type="BMRB" id="Q9HAU0"/>
<dbReference type="SMR" id="Q9HAU0"/>
<dbReference type="BioGRID" id="119982">
    <property type="interactions" value="243"/>
</dbReference>
<dbReference type="FunCoup" id="Q9HAU0">
    <property type="interactions" value="2460"/>
</dbReference>
<dbReference type="IntAct" id="Q9HAU0">
    <property type="interactions" value="106"/>
</dbReference>
<dbReference type="MINT" id="Q9HAU0"/>
<dbReference type="STRING" id="9606.ENSP00000404296"/>
<dbReference type="GlyConnect" id="2872">
    <property type="glycosylation" value="1 O-GlcNAc glycan (1 site)"/>
</dbReference>
<dbReference type="GlyCosmos" id="Q9HAU0">
    <property type="glycosylation" value="1 site, 1 glycan"/>
</dbReference>
<dbReference type="GlyGen" id="Q9HAU0">
    <property type="glycosylation" value="5 sites, 1 O-linked glycan (4 sites)"/>
</dbReference>
<dbReference type="iPTMnet" id="Q9HAU0"/>
<dbReference type="PhosphoSitePlus" id="Q9HAU0"/>
<dbReference type="BioMuta" id="PLEKHA5"/>
<dbReference type="DMDM" id="48474955"/>
<dbReference type="jPOST" id="Q9HAU0"/>
<dbReference type="MassIVE" id="Q9HAU0"/>
<dbReference type="PeptideAtlas" id="Q9HAU0"/>
<dbReference type="ProteomicsDB" id="20581"/>
<dbReference type="ProteomicsDB" id="25347"/>
<dbReference type="ProteomicsDB" id="69632"/>
<dbReference type="ProteomicsDB" id="81434">
    <molecule id="Q9HAU0-1"/>
</dbReference>
<dbReference type="ProteomicsDB" id="81435">
    <molecule id="Q9HAU0-2"/>
</dbReference>
<dbReference type="ProteomicsDB" id="81436">
    <molecule id="Q9HAU0-3"/>
</dbReference>
<dbReference type="ProteomicsDB" id="81437">
    <molecule id="Q9HAU0-4"/>
</dbReference>
<dbReference type="ProteomicsDB" id="81438">
    <molecule id="Q9HAU0-5"/>
</dbReference>
<dbReference type="Pumba" id="Q9HAU0"/>
<dbReference type="TopDownProteomics" id="Q9HAU0-3">
    <molecule id="Q9HAU0-3"/>
</dbReference>
<dbReference type="Antibodypedia" id="23890">
    <property type="antibodies" value="87 antibodies from 26 providers"/>
</dbReference>
<dbReference type="DNASU" id="54477"/>
<dbReference type="Ensembl" id="ENST00000299275.10">
    <molecule id="Q9HAU0-1"/>
    <property type="protein sequence ID" value="ENSP00000299275.6"/>
    <property type="gene ID" value="ENSG00000052126.17"/>
</dbReference>
<dbReference type="Ensembl" id="ENST00000424268.5">
    <molecule id="Q9HAU0-8"/>
    <property type="protein sequence ID" value="ENSP00000400411.2"/>
    <property type="gene ID" value="ENSG00000052126.17"/>
</dbReference>
<dbReference type="Ensembl" id="ENST00000429027.7">
    <molecule id="Q9HAU0-6"/>
    <property type="protein sequence ID" value="ENSP00000404296.2"/>
    <property type="gene ID" value="ENSG00000052126.17"/>
</dbReference>
<dbReference type="Ensembl" id="ENST00000538714.5">
    <molecule id="Q9HAU0-2"/>
    <property type="protein sequence ID" value="ENSP00000439673.1"/>
    <property type="gene ID" value="ENSG00000052126.17"/>
</dbReference>
<dbReference type="Ensembl" id="ENST00000540972.5">
    <molecule id="Q9HAU0-7"/>
    <property type="protein sequence ID" value="ENSP00000439396.1"/>
    <property type="gene ID" value="ENSG00000052126.17"/>
</dbReference>
<dbReference type="GeneID" id="54477"/>
<dbReference type="KEGG" id="hsa:54477"/>
<dbReference type="MANE-Select" id="ENST00000429027.7">
    <molecule id="Q9HAU0-6"/>
    <property type="protein sequence ID" value="ENSP00000404296.2"/>
    <property type="RefSeq nucleotide sequence ID" value="NM_001256470.2"/>
    <property type="RefSeq protein sequence ID" value="NP_001243399.1"/>
</dbReference>
<dbReference type="UCSC" id="uc001rdz.5">
    <molecule id="Q9HAU0-1"/>
    <property type="organism name" value="human"/>
</dbReference>
<dbReference type="AGR" id="HGNC:30036"/>
<dbReference type="CTD" id="54477"/>
<dbReference type="DisGeNET" id="54477"/>
<dbReference type="GeneCards" id="PLEKHA5"/>
<dbReference type="HGNC" id="HGNC:30036">
    <property type="gene designation" value="PLEKHA5"/>
</dbReference>
<dbReference type="HPA" id="ENSG00000052126">
    <property type="expression patterns" value="Low tissue specificity"/>
</dbReference>
<dbReference type="MIM" id="607770">
    <property type="type" value="gene"/>
</dbReference>
<dbReference type="neXtProt" id="NX_Q9HAU0"/>
<dbReference type="OpenTargets" id="ENSG00000052126"/>
<dbReference type="PharmGKB" id="PA134949896"/>
<dbReference type="VEuPathDB" id="HostDB:ENSG00000052126"/>
<dbReference type="eggNOG" id="KOG0940">
    <property type="taxonomic scope" value="Eukaryota"/>
</dbReference>
<dbReference type="GeneTree" id="ENSGT00940000155728"/>
<dbReference type="HOGENOM" id="CLU_2673480_0_0_1"/>
<dbReference type="InParanoid" id="Q9HAU0"/>
<dbReference type="OMA" id="NGAHTPD"/>
<dbReference type="OrthoDB" id="43122at2759"/>
<dbReference type="PAN-GO" id="Q9HAU0">
    <property type="GO annotations" value="5 GO annotations based on evolutionary models"/>
</dbReference>
<dbReference type="PhylomeDB" id="Q9HAU0"/>
<dbReference type="TreeFam" id="TF329090"/>
<dbReference type="PathwayCommons" id="Q9HAU0"/>
<dbReference type="Reactome" id="R-HSA-1660499">
    <property type="pathway name" value="Synthesis of PIPs at the plasma membrane"/>
</dbReference>
<dbReference type="SignaLink" id="Q9HAU0"/>
<dbReference type="BioGRID-ORCS" id="54477">
    <property type="hits" value="15 hits in 1154 CRISPR screens"/>
</dbReference>
<dbReference type="CD-CODE" id="FB4E32DD">
    <property type="entry name" value="Presynaptic clusters and postsynaptic densities"/>
</dbReference>
<dbReference type="ChiTaRS" id="PLEKHA5">
    <property type="organism name" value="human"/>
</dbReference>
<dbReference type="EvolutionaryTrace" id="Q9HAU0"/>
<dbReference type="GeneWiki" id="PLEKHA5"/>
<dbReference type="GenomeRNAi" id="54477"/>
<dbReference type="Pharos" id="Q9HAU0">
    <property type="development level" value="Tbio"/>
</dbReference>
<dbReference type="PRO" id="PR:Q9HAU0"/>
<dbReference type="Proteomes" id="UP000005640">
    <property type="component" value="Chromosome 12"/>
</dbReference>
<dbReference type="RNAct" id="Q9HAU0">
    <property type="molecule type" value="protein"/>
</dbReference>
<dbReference type="Bgee" id="ENSG00000052126">
    <property type="expression patterns" value="Expressed in mucosa of paranasal sinus and 204 other cell types or tissues"/>
</dbReference>
<dbReference type="ExpressionAtlas" id="Q9HAU0">
    <property type="expression patterns" value="baseline and differential"/>
</dbReference>
<dbReference type="GO" id="GO:0005829">
    <property type="term" value="C:cytosol"/>
    <property type="evidence" value="ECO:0000314"/>
    <property type="project" value="HPA"/>
</dbReference>
<dbReference type="GO" id="GO:0098978">
    <property type="term" value="C:glutamatergic synapse"/>
    <property type="evidence" value="ECO:0007669"/>
    <property type="project" value="Ensembl"/>
</dbReference>
<dbReference type="GO" id="GO:0016020">
    <property type="term" value="C:membrane"/>
    <property type="evidence" value="ECO:0007005"/>
    <property type="project" value="UniProtKB"/>
</dbReference>
<dbReference type="GO" id="GO:0005654">
    <property type="term" value="C:nucleoplasm"/>
    <property type="evidence" value="ECO:0000314"/>
    <property type="project" value="HPA"/>
</dbReference>
<dbReference type="GO" id="GO:0014069">
    <property type="term" value="C:postsynaptic density"/>
    <property type="evidence" value="ECO:0007669"/>
    <property type="project" value="Ensembl"/>
</dbReference>
<dbReference type="GO" id="GO:0080025">
    <property type="term" value="F:phosphatidylinositol-3,5-bisphosphate binding"/>
    <property type="evidence" value="ECO:0000318"/>
    <property type="project" value="GO_Central"/>
</dbReference>
<dbReference type="GO" id="GO:0032266">
    <property type="term" value="F:phosphatidylinositol-3-phosphate binding"/>
    <property type="evidence" value="ECO:0000318"/>
    <property type="project" value="GO_Central"/>
</dbReference>
<dbReference type="GO" id="GO:0070273">
    <property type="term" value="F:phosphatidylinositol-4-phosphate binding"/>
    <property type="evidence" value="ECO:0000318"/>
    <property type="project" value="GO_Central"/>
</dbReference>
<dbReference type="GO" id="GO:0010314">
    <property type="term" value="F:phosphatidylinositol-5-phosphate binding"/>
    <property type="evidence" value="ECO:0000318"/>
    <property type="project" value="GO_Central"/>
</dbReference>
<dbReference type="GO" id="GO:0061458">
    <property type="term" value="P:reproductive system development"/>
    <property type="evidence" value="ECO:0007669"/>
    <property type="project" value="Ensembl"/>
</dbReference>
<dbReference type="CDD" id="cd13248">
    <property type="entry name" value="PH_PEPP1_2_3"/>
    <property type="match status" value="1"/>
</dbReference>
<dbReference type="CDD" id="cd00201">
    <property type="entry name" value="WW"/>
    <property type="match status" value="1"/>
</dbReference>
<dbReference type="FunFam" id="2.30.29.30:FF:000083">
    <property type="entry name" value="Pleckstrin homology domain-containing family A member 5"/>
    <property type="match status" value="1"/>
</dbReference>
<dbReference type="FunFam" id="2.20.70.10:FF:000027">
    <property type="entry name" value="pleckstrin homology domain-containing family A member 5 isoform X1"/>
    <property type="match status" value="1"/>
</dbReference>
<dbReference type="FunFam" id="2.20.70.10:FF:000043">
    <property type="entry name" value="Pleckstrin homology domain-containing, family A member 5"/>
    <property type="match status" value="1"/>
</dbReference>
<dbReference type="Gene3D" id="2.20.70.10">
    <property type="match status" value="2"/>
</dbReference>
<dbReference type="Gene3D" id="2.30.29.30">
    <property type="entry name" value="Pleckstrin-homology domain (PH domain)/Phosphotyrosine-binding domain (PTB)"/>
    <property type="match status" value="1"/>
</dbReference>
<dbReference type="InterPro" id="IPR011993">
    <property type="entry name" value="PH-like_dom_sf"/>
</dbReference>
<dbReference type="InterPro" id="IPR001849">
    <property type="entry name" value="PH_domain"/>
</dbReference>
<dbReference type="InterPro" id="IPR040392">
    <property type="entry name" value="PKHA4-7_PH"/>
</dbReference>
<dbReference type="InterPro" id="IPR001202">
    <property type="entry name" value="WW_dom"/>
</dbReference>
<dbReference type="InterPro" id="IPR036020">
    <property type="entry name" value="WW_dom_sf"/>
</dbReference>
<dbReference type="PANTHER" id="PTHR12752">
    <property type="entry name" value="PHOSPHOINOSITOL 3-PHOSPHATE-BINDING PROTEIN"/>
    <property type="match status" value="1"/>
</dbReference>
<dbReference type="PANTHER" id="PTHR12752:SF3">
    <property type="entry name" value="PLECKSTRIN HOMOLOGY DOMAIN-CONTAINING FAMILY A MEMBER 5"/>
    <property type="match status" value="1"/>
</dbReference>
<dbReference type="Pfam" id="PF00169">
    <property type="entry name" value="PH"/>
    <property type="match status" value="1"/>
</dbReference>
<dbReference type="Pfam" id="PF00397">
    <property type="entry name" value="WW"/>
    <property type="match status" value="1"/>
</dbReference>
<dbReference type="SMART" id="SM00233">
    <property type="entry name" value="PH"/>
    <property type="match status" value="1"/>
</dbReference>
<dbReference type="SMART" id="SM00456">
    <property type="entry name" value="WW"/>
    <property type="match status" value="2"/>
</dbReference>
<dbReference type="SUPFAM" id="SSF50729">
    <property type="entry name" value="PH domain-like"/>
    <property type="match status" value="1"/>
</dbReference>
<dbReference type="SUPFAM" id="SSF51045">
    <property type="entry name" value="WW domain"/>
    <property type="match status" value="2"/>
</dbReference>
<dbReference type="PROSITE" id="PS50003">
    <property type="entry name" value="PH_DOMAIN"/>
    <property type="match status" value="1"/>
</dbReference>
<dbReference type="PROSITE" id="PS01159">
    <property type="entry name" value="WW_DOMAIN_1"/>
    <property type="match status" value="1"/>
</dbReference>
<dbReference type="PROSITE" id="PS50020">
    <property type="entry name" value="WW_DOMAIN_2"/>
    <property type="match status" value="2"/>
</dbReference>
<proteinExistence type="evidence at protein level"/>
<feature type="initiator methionine" description="Removed" evidence="17">
    <location>
        <position position="1"/>
    </location>
</feature>
<feature type="chain" id="PRO_0000053883" description="Pleckstrin homology domain-containing family A member 5">
    <location>
        <begin position="2"/>
        <end position="1116"/>
    </location>
</feature>
<feature type="domain" description="WW 1" evidence="2">
    <location>
        <begin position="10"/>
        <end position="43"/>
    </location>
</feature>
<feature type="domain" description="WW 2" evidence="2">
    <location>
        <begin position="56"/>
        <end position="89"/>
    </location>
</feature>
<feature type="domain" description="PH" evidence="1">
    <location>
        <begin position="169"/>
        <end position="268"/>
    </location>
</feature>
<feature type="region of interest" description="Disordered" evidence="3">
    <location>
        <begin position="140"/>
        <end position="163"/>
    </location>
</feature>
<feature type="region of interest" description="Disordered" evidence="3">
    <location>
        <begin position="459"/>
        <end position="495"/>
    </location>
</feature>
<feature type="region of interest" description="Disordered" evidence="3">
    <location>
        <begin position="928"/>
        <end position="978"/>
    </location>
</feature>
<feature type="region of interest" description="Disordered" evidence="3">
    <location>
        <begin position="1025"/>
        <end position="1116"/>
    </location>
</feature>
<feature type="compositionally biased region" description="Basic residues" evidence="3">
    <location>
        <begin position="147"/>
        <end position="156"/>
    </location>
</feature>
<feature type="compositionally biased region" description="Basic and acidic residues" evidence="3">
    <location>
        <begin position="479"/>
        <end position="495"/>
    </location>
</feature>
<feature type="compositionally biased region" description="Polar residues" evidence="3">
    <location>
        <begin position="930"/>
        <end position="949"/>
    </location>
</feature>
<feature type="compositionally biased region" description="Basic and acidic residues" evidence="3">
    <location>
        <begin position="952"/>
        <end position="978"/>
    </location>
</feature>
<feature type="compositionally biased region" description="Polar residues" evidence="3">
    <location>
        <begin position="1036"/>
        <end position="1046"/>
    </location>
</feature>
<feature type="compositionally biased region" description="Basic and acidic residues" evidence="3">
    <location>
        <begin position="1047"/>
        <end position="1061"/>
    </location>
</feature>
<feature type="compositionally biased region" description="Polar residues" evidence="3">
    <location>
        <begin position="1070"/>
        <end position="1085"/>
    </location>
</feature>
<feature type="compositionally biased region" description="Low complexity" evidence="3">
    <location>
        <begin position="1088"/>
        <end position="1101"/>
    </location>
</feature>
<feature type="modified residue" description="N-acetylalanine" evidence="17">
    <location>
        <position position="2"/>
    </location>
</feature>
<feature type="modified residue" description="Phosphoserine" evidence="18">
    <location>
        <position position="55"/>
    </location>
</feature>
<feature type="modified residue" description="Phosphoserine" evidence="18">
    <location>
        <position position="382"/>
    </location>
</feature>
<feature type="modified residue" description="Phosphoserine" evidence="18">
    <location>
        <position position="410"/>
    </location>
</feature>
<feature type="modified residue" description="Phosphothreonine" evidence="18">
    <location>
        <position position="438"/>
    </location>
</feature>
<feature type="modified residue" description="Phosphothreonine" evidence="18">
    <location>
        <position position="460"/>
    </location>
</feature>
<feature type="modified residue" description="Phosphoserine" evidence="18">
    <location>
        <position position="568"/>
    </location>
</feature>
<feature type="modified residue" description="Phosphoserine" evidence="18">
    <location>
        <position position="607"/>
    </location>
</feature>
<feature type="modified residue" description="Phosphoserine" evidence="16 18">
    <location>
        <position position="809"/>
    </location>
</feature>
<feature type="modified residue" description="Phosphoserine" evidence="14 16 18">
    <location>
        <position position="855"/>
    </location>
</feature>
<feature type="modified residue" description="Phosphoserine" evidence="12 13 14 15 18">
    <location>
        <position position="933"/>
    </location>
</feature>
<feature type="modified residue" description="Phosphoserine" evidence="18">
    <location>
        <position position="937"/>
    </location>
</feature>
<feature type="cross-link" description="Glycyl lysine isopeptide (Lys-Gly) (interchain with G-Cter in SUMO2)" evidence="19">
    <location>
        <position position="301"/>
    </location>
</feature>
<feature type="splice variant" id="VSP_047514" description="In isoform 8." evidence="7">
    <location>
        <begin position="1"/>
        <end position="108"/>
    </location>
</feature>
<feature type="splice variant" id="VSP_046861" description="In isoform 7." evidence="8">
    <location>
        <begin position="77"/>
        <end position="1116"/>
    </location>
</feature>
<feature type="splice variant" id="VSP_044678" description="In isoform 6." evidence="10">
    <original>K</original>
    <variation>KRITFNF</variation>
    <location>
        <position position="275"/>
    </location>
</feature>
<feature type="splice variant" id="VSP_009775" description="In isoform 2 and isoform 6." evidence="6 10">
    <original>T</original>
    <variation>TPEELTLLLIKLRRQQAELSSIREHTLAQLMQLKLEAHSPKNEILSHHLQRNTIYLDHQ</variation>
    <location>
        <position position="615"/>
    </location>
</feature>
<feature type="splice variant" id="VSP_047515" description="In isoform 8." evidence="7">
    <original>T</original>
    <variation>TMKENEPIITMVHTMIENSALRPQLYQQ</variation>
    <location>
        <position position="615"/>
    </location>
</feature>
<feature type="splice variant" id="VSP_009776" description="In isoform 3." evidence="8">
    <original>LSQDEGRGTLYKYRPEEVDIDAKLSRLCEQDKVVH</original>
    <variation>WGREKVATATGAAEAVASDTHLPRTGSSSPSLLCV</variation>
    <location>
        <begin position="616"/>
        <end position="650"/>
    </location>
</feature>
<feature type="splice variant" id="VSP_044679" description="In isoform 6." evidence="10">
    <original>L</original>
    <variation>MKENEPIITMVHTMIENSALRPQLYQQFLRQKSKISLYCL</variation>
    <location>
        <position position="616"/>
    </location>
</feature>
<feature type="splice variant" id="VSP_014595" description="In isoform 3." evidence="8">
    <location>
        <begin position="651"/>
        <end position="1116"/>
    </location>
</feature>
<feature type="splice variant" id="VSP_009777" description="In isoform 5." evidence="7">
    <location>
        <begin position="785"/>
        <end position="840"/>
    </location>
</feature>
<feature type="splice variant" id="VSP_009778" description="In isoform 4, isoform 6 and isoform 8." evidence="7 9 10">
    <original>E</original>
    <variation>EEEEVVPPRPPLPRSYDFTEQPPIIPPLPSDSSSLLCYSRGPVHLPEEKKMYQVQGYPRNGSHC</variation>
    <location>
        <position position="800"/>
    </location>
</feature>
<feature type="sequence conflict" description="In Ref. 5; BAG57882." evidence="11" ref="5">
    <original>K</original>
    <variation>R</variation>
    <location>
        <position position="311"/>
    </location>
</feature>
<feature type="sequence conflict" description="In Ref. 5; BAG57882." evidence="11" ref="5">
    <original>S</original>
    <variation>T</variation>
    <location>
        <position position="534"/>
    </location>
</feature>
<feature type="sequence conflict" description="In Ref. 5; BAB14419." evidence="11" ref="5">
    <original>K</original>
    <variation>R</variation>
    <location>
        <position position="627"/>
    </location>
</feature>
<feature type="sequence conflict" description="In Ref. 5; BAB14419." evidence="11" ref="5">
    <original>M</original>
    <variation>T</variation>
    <location>
        <position position="736"/>
    </location>
</feature>
<feature type="sequence conflict" description="In Ref. 5; BAA91742." evidence="11" ref="5">
    <original>P</original>
    <variation>S</variation>
    <location>
        <position position="970"/>
    </location>
</feature>
<feature type="strand" evidence="20">
    <location>
        <begin position="172"/>
        <end position="179"/>
    </location>
</feature>
<feature type="strand" evidence="20">
    <location>
        <begin position="182"/>
        <end position="184"/>
    </location>
</feature>
<feature type="strand" evidence="20">
    <location>
        <begin position="187"/>
        <end position="195"/>
    </location>
</feature>
<feature type="strand" evidence="20">
    <location>
        <begin position="198"/>
        <end position="204"/>
    </location>
</feature>
<feature type="strand" evidence="20">
    <location>
        <begin position="209"/>
        <end position="214"/>
    </location>
</feature>
<feature type="helix" evidence="20">
    <location>
        <begin position="216"/>
        <end position="218"/>
    </location>
</feature>
<feature type="strand" evidence="20">
    <location>
        <begin position="219"/>
        <end position="223"/>
    </location>
</feature>
<feature type="helix" evidence="20">
    <location>
        <begin position="226"/>
        <end position="228"/>
    </location>
</feature>
<feature type="strand" evidence="20">
    <location>
        <begin position="234"/>
        <end position="239"/>
    </location>
</feature>
<feature type="strand" evidence="20">
    <location>
        <begin position="241"/>
        <end position="243"/>
    </location>
</feature>
<feature type="strand" evidence="20">
    <location>
        <begin position="246"/>
        <end position="249"/>
    </location>
</feature>
<feature type="helix" evidence="20">
    <location>
        <begin position="253"/>
        <end position="267"/>
    </location>
</feature>
<name>PKHA5_HUMAN</name>